<dbReference type="EMBL" id="AY150847">
    <property type="protein sequence ID" value="AAN75275.1"/>
    <property type="molecule type" value="mRNA"/>
</dbReference>
<dbReference type="PIR" id="B42965">
    <property type="entry name" value="B42965"/>
</dbReference>
<dbReference type="PIR" id="D42965">
    <property type="entry name" value="D42965"/>
</dbReference>
<dbReference type="RefSeq" id="NP_989854.1">
    <property type="nucleotide sequence ID" value="NM_204523.1"/>
</dbReference>
<dbReference type="PDB" id="1MIX">
    <property type="method" value="X-ray"/>
    <property type="resolution" value="1.75 A"/>
    <property type="chains" value="A=196-400"/>
</dbReference>
<dbReference type="PDB" id="1MIZ">
    <property type="method" value="X-ray"/>
    <property type="resolution" value="1.90 A"/>
    <property type="chains" value="B=200-400"/>
</dbReference>
<dbReference type="PDB" id="1MK7">
    <property type="method" value="X-ray"/>
    <property type="resolution" value="2.20 A"/>
    <property type="chains" value="B/D=209-400"/>
</dbReference>
<dbReference type="PDB" id="1MK9">
    <property type="method" value="X-ray"/>
    <property type="resolution" value="2.80 A"/>
    <property type="chains" value="B/D/F/H=209-400"/>
</dbReference>
<dbReference type="PDB" id="1RKC">
    <property type="method" value="X-ray"/>
    <property type="resolution" value="2.70 A"/>
    <property type="chains" value="B=1944-1969"/>
</dbReference>
<dbReference type="PDB" id="1U6H">
    <property type="method" value="X-ray"/>
    <property type="resolution" value="2.38 A"/>
    <property type="chains" value="B=849-879"/>
</dbReference>
<dbReference type="PDB" id="1XWJ">
    <property type="method" value="X-ray"/>
    <property type="resolution" value="2.60 A"/>
    <property type="chains" value="B=1944-1969"/>
</dbReference>
<dbReference type="PDB" id="1ZVZ">
    <property type="method" value="X-ray"/>
    <property type="resolution" value="1.80 A"/>
    <property type="chains" value="B=820-844"/>
</dbReference>
<dbReference type="PDB" id="1ZW2">
    <property type="method" value="X-ray"/>
    <property type="resolution" value="2.10 A"/>
    <property type="chains" value="B=2344-2368"/>
</dbReference>
<dbReference type="PDB" id="2H7D">
    <property type="method" value="NMR"/>
    <property type="chains" value="A=309-405"/>
</dbReference>
<dbReference type="PDB" id="2H7E">
    <property type="method" value="NMR"/>
    <property type="chains" value="A=309-405"/>
</dbReference>
<dbReference type="PDB" id="2HRJ">
    <property type="method" value="NMR"/>
    <property type="chains" value="A=189-309"/>
</dbReference>
<dbReference type="PDB" id="2K00">
    <property type="method" value="NMR"/>
    <property type="chains" value="A=309-400"/>
</dbReference>
<dbReference type="PDB" id="8S4Y">
    <property type="method" value="X-ray"/>
    <property type="resolution" value="2.70 A"/>
    <property type="chains" value="B=209-400"/>
</dbReference>
<dbReference type="PDBsum" id="1MIX"/>
<dbReference type="PDBsum" id="1MIZ"/>
<dbReference type="PDBsum" id="1MK7"/>
<dbReference type="PDBsum" id="1MK9"/>
<dbReference type="PDBsum" id="1RKC"/>
<dbReference type="PDBsum" id="1U6H"/>
<dbReference type="PDBsum" id="1XWJ"/>
<dbReference type="PDBsum" id="1ZVZ"/>
<dbReference type="PDBsum" id="1ZW2"/>
<dbReference type="PDBsum" id="2H7D"/>
<dbReference type="PDBsum" id="2H7E"/>
<dbReference type="PDBsum" id="2HRJ"/>
<dbReference type="PDBsum" id="2K00"/>
<dbReference type="PDBsum" id="8S4Y"/>
<dbReference type="BMRB" id="P54939"/>
<dbReference type="SMR" id="P54939"/>
<dbReference type="DIP" id="DIP-35571N"/>
<dbReference type="ELM" id="P54939"/>
<dbReference type="FunCoup" id="P54939">
    <property type="interactions" value="2225"/>
</dbReference>
<dbReference type="IntAct" id="P54939">
    <property type="interactions" value="4"/>
</dbReference>
<dbReference type="STRING" id="9031.ENSGALP00000056315"/>
<dbReference type="GlyConnect" id="584">
    <property type="glycosylation" value="1 O-GlcNAc glycan (2 sites)"/>
</dbReference>
<dbReference type="GlyCosmos" id="P54939">
    <property type="glycosylation" value="2 sites, 1 glycan"/>
</dbReference>
<dbReference type="GlyGen" id="P54939">
    <property type="glycosylation" value="2 sites, 1 O-linked glycan (2 sites)"/>
</dbReference>
<dbReference type="PaxDb" id="9031-ENSGALP00000004013"/>
<dbReference type="GeneID" id="395194"/>
<dbReference type="KEGG" id="gga:395194"/>
<dbReference type="CTD" id="7094"/>
<dbReference type="VEuPathDB" id="HostDB:geneid_395194"/>
<dbReference type="eggNOG" id="KOG4261">
    <property type="taxonomic scope" value="Eukaryota"/>
</dbReference>
<dbReference type="InParanoid" id="P54939"/>
<dbReference type="OrthoDB" id="10262320at2759"/>
<dbReference type="PhylomeDB" id="P54939"/>
<dbReference type="EvolutionaryTrace" id="P54939"/>
<dbReference type="PRO" id="PR:P54939"/>
<dbReference type="Proteomes" id="UP000000539">
    <property type="component" value="Unassembled WGS sequence"/>
</dbReference>
<dbReference type="GO" id="GO:0009986">
    <property type="term" value="C:cell surface"/>
    <property type="evidence" value="ECO:0007669"/>
    <property type="project" value="UniProtKB-SubCell"/>
</dbReference>
<dbReference type="GO" id="GO:0005737">
    <property type="term" value="C:cytoplasm"/>
    <property type="evidence" value="ECO:0000318"/>
    <property type="project" value="GO_Central"/>
</dbReference>
<dbReference type="GO" id="GO:0005856">
    <property type="term" value="C:cytoskeleton"/>
    <property type="evidence" value="ECO:0007669"/>
    <property type="project" value="UniProtKB-SubCell"/>
</dbReference>
<dbReference type="GO" id="GO:0005829">
    <property type="term" value="C:cytosol"/>
    <property type="evidence" value="ECO:0000304"/>
    <property type="project" value="HGNC-UCL"/>
</dbReference>
<dbReference type="GO" id="GO:0005925">
    <property type="term" value="C:focal adhesion"/>
    <property type="evidence" value="ECO:0000314"/>
    <property type="project" value="HGNC-UCL"/>
</dbReference>
<dbReference type="GO" id="GO:0005886">
    <property type="term" value="C:plasma membrane"/>
    <property type="evidence" value="ECO:0000318"/>
    <property type="project" value="GO_Central"/>
</dbReference>
<dbReference type="GO" id="GO:0001726">
    <property type="term" value="C:ruffle"/>
    <property type="evidence" value="ECO:0000314"/>
    <property type="project" value="HGNC-UCL"/>
</dbReference>
<dbReference type="GO" id="GO:0032587">
    <property type="term" value="C:ruffle membrane"/>
    <property type="evidence" value="ECO:0007669"/>
    <property type="project" value="UniProtKB-SubCell"/>
</dbReference>
<dbReference type="GO" id="GO:0051015">
    <property type="term" value="F:actin filament binding"/>
    <property type="evidence" value="ECO:0007669"/>
    <property type="project" value="InterPro"/>
</dbReference>
<dbReference type="GO" id="GO:0005178">
    <property type="term" value="F:integrin binding"/>
    <property type="evidence" value="ECO:0000318"/>
    <property type="project" value="GO_Central"/>
</dbReference>
<dbReference type="GO" id="GO:0005200">
    <property type="term" value="F:structural constituent of cytoskeleton"/>
    <property type="evidence" value="ECO:0007669"/>
    <property type="project" value="InterPro"/>
</dbReference>
<dbReference type="GO" id="GO:0098609">
    <property type="term" value="P:cell-cell adhesion"/>
    <property type="evidence" value="ECO:0000318"/>
    <property type="project" value="GO_Central"/>
</dbReference>
<dbReference type="CDD" id="cd14473">
    <property type="entry name" value="FERM_B-lobe"/>
    <property type="match status" value="1"/>
</dbReference>
<dbReference type="CDD" id="cd10569">
    <property type="entry name" value="FERM_C_Talin"/>
    <property type="match status" value="1"/>
</dbReference>
<dbReference type="CDD" id="cd17171">
    <property type="entry name" value="FERM_F0_TLN1"/>
    <property type="match status" value="1"/>
</dbReference>
<dbReference type="CDD" id="cd17173">
    <property type="entry name" value="FERM_F1_TLN1"/>
    <property type="match status" value="1"/>
</dbReference>
<dbReference type="CDD" id="cd12150">
    <property type="entry name" value="talin-RS"/>
    <property type="match status" value="1"/>
</dbReference>
<dbReference type="FunFam" id="1.20.120.230:FF:000005">
    <property type="entry name" value="Talin 1"/>
    <property type="match status" value="1"/>
</dbReference>
<dbReference type="FunFam" id="3.10.20.90:FF:000066">
    <property type="entry name" value="Talin 1"/>
    <property type="match status" value="1"/>
</dbReference>
<dbReference type="FunFam" id="1.20.120.230:FF:000002">
    <property type="entry name" value="Talin 2"/>
    <property type="match status" value="1"/>
</dbReference>
<dbReference type="FunFam" id="1.20.120.230:FF:000003">
    <property type="entry name" value="Talin 2"/>
    <property type="match status" value="1"/>
</dbReference>
<dbReference type="FunFam" id="1.20.120.230:FF:000004">
    <property type="entry name" value="Talin 2"/>
    <property type="match status" value="1"/>
</dbReference>
<dbReference type="FunFam" id="1.20.120.230:FF:000009">
    <property type="entry name" value="Talin 2"/>
    <property type="match status" value="1"/>
</dbReference>
<dbReference type="FunFam" id="1.20.1410.10:FF:000001">
    <property type="entry name" value="Talin 2"/>
    <property type="match status" value="1"/>
</dbReference>
<dbReference type="FunFam" id="1.20.1420.10:FF:000001">
    <property type="entry name" value="Talin 2"/>
    <property type="match status" value="1"/>
</dbReference>
<dbReference type="FunFam" id="1.20.1420.10:FF:000002">
    <property type="entry name" value="Talin 2"/>
    <property type="match status" value="1"/>
</dbReference>
<dbReference type="FunFam" id="1.20.1420.10:FF:000005">
    <property type="entry name" value="Talin 2"/>
    <property type="match status" value="1"/>
</dbReference>
<dbReference type="FunFam" id="1.20.1420.10:FF:000006">
    <property type="entry name" value="Talin 2"/>
    <property type="match status" value="1"/>
</dbReference>
<dbReference type="FunFam" id="1.20.1420.10:FF:000007">
    <property type="entry name" value="Talin 2"/>
    <property type="match status" value="1"/>
</dbReference>
<dbReference type="FunFam" id="1.20.80.10:FF:000007">
    <property type="entry name" value="Talin 2"/>
    <property type="match status" value="1"/>
</dbReference>
<dbReference type="FunFam" id="2.30.29.30:FF:000028">
    <property type="entry name" value="Talin 2"/>
    <property type="match status" value="1"/>
</dbReference>
<dbReference type="FunFam" id="3.10.20.90:FF:000028">
    <property type="entry name" value="Talin 2"/>
    <property type="match status" value="1"/>
</dbReference>
<dbReference type="Gene3D" id="1.20.80.10">
    <property type="match status" value="1"/>
</dbReference>
<dbReference type="Gene3D" id="1.20.120.230">
    <property type="entry name" value="Alpha-catenin/vinculin-like"/>
    <property type="match status" value="5"/>
</dbReference>
<dbReference type="Gene3D" id="1.20.1410.10">
    <property type="entry name" value="I/LWEQ domain"/>
    <property type="match status" value="1"/>
</dbReference>
<dbReference type="Gene3D" id="3.10.20.90">
    <property type="entry name" value="Phosphatidylinositol 3-kinase Catalytic Subunit, Chain A, domain 1"/>
    <property type="match status" value="3"/>
</dbReference>
<dbReference type="Gene3D" id="2.30.29.30">
    <property type="entry name" value="Pleckstrin-homology domain (PH domain)/Phosphotyrosine-binding domain (PTB)"/>
    <property type="match status" value="1"/>
</dbReference>
<dbReference type="Gene3D" id="1.20.1420.10">
    <property type="entry name" value="Talin, central domain"/>
    <property type="match status" value="7"/>
</dbReference>
<dbReference type="IDEAL" id="IID50213"/>
<dbReference type="InterPro" id="IPR036723">
    <property type="entry name" value="Alpha-catenin/vinculin-like_sf"/>
</dbReference>
<dbReference type="InterPro" id="IPR019749">
    <property type="entry name" value="Band_41_domain"/>
</dbReference>
<dbReference type="InterPro" id="IPR014352">
    <property type="entry name" value="FERM/acyl-CoA-bd_prot_sf"/>
</dbReference>
<dbReference type="InterPro" id="IPR035963">
    <property type="entry name" value="FERM_2"/>
</dbReference>
<dbReference type="InterPro" id="IPR019748">
    <property type="entry name" value="FERM_central"/>
</dbReference>
<dbReference type="InterPro" id="IPR019747">
    <property type="entry name" value="FERM_CS"/>
</dbReference>
<dbReference type="InterPro" id="IPR000299">
    <property type="entry name" value="FERM_domain"/>
</dbReference>
<dbReference type="InterPro" id="IPR032425">
    <property type="entry name" value="FERM_f0"/>
</dbReference>
<dbReference type="InterPro" id="IPR018979">
    <property type="entry name" value="FERM_N"/>
</dbReference>
<dbReference type="InterPro" id="IPR035964">
    <property type="entry name" value="I/LWEQ_dom_sf"/>
</dbReference>
<dbReference type="InterPro" id="IPR002558">
    <property type="entry name" value="ILWEQ_dom"/>
</dbReference>
<dbReference type="InterPro" id="IPR002404">
    <property type="entry name" value="IRS_PTB"/>
</dbReference>
<dbReference type="InterPro" id="IPR011993">
    <property type="entry name" value="PH-like_dom_sf"/>
</dbReference>
<dbReference type="InterPro" id="IPR037438">
    <property type="entry name" value="Talin1/2-RS"/>
</dbReference>
<dbReference type="InterPro" id="IPR015224">
    <property type="entry name" value="Talin_cent"/>
</dbReference>
<dbReference type="InterPro" id="IPR036476">
    <property type="entry name" value="Talin_cent_sf"/>
</dbReference>
<dbReference type="InterPro" id="IPR054082">
    <property type="entry name" value="Talin_IBS2B"/>
</dbReference>
<dbReference type="InterPro" id="IPR049108">
    <property type="entry name" value="Talin_R4"/>
</dbReference>
<dbReference type="InterPro" id="IPR054060">
    <property type="entry name" value="TLN1-like_RS"/>
</dbReference>
<dbReference type="InterPro" id="IPR029071">
    <property type="entry name" value="Ubiquitin-like_domsf"/>
</dbReference>
<dbReference type="InterPro" id="IPR015009">
    <property type="entry name" value="Vinculin-bd_dom"/>
</dbReference>
<dbReference type="PANTHER" id="PTHR19981">
    <property type="entry name" value="TALIN"/>
    <property type="match status" value="1"/>
</dbReference>
<dbReference type="PANTHER" id="PTHR19981:SF7">
    <property type="entry name" value="TALIN-1"/>
    <property type="match status" value="1"/>
</dbReference>
<dbReference type="Pfam" id="PF16511">
    <property type="entry name" value="FERM_f0"/>
    <property type="match status" value="1"/>
</dbReference>
<dbReference type="Pfam" id="PF00373">
    <property type="entry name" value="FERM_M"/>
    <property type="match status" value="1"/>
</dbReference>
<dbReference type="Pfam" id="PF09379">
    <property type="entry name" value="FERM_N"/>
    <property type="match status" value="1"/>
</dbReference>
<dbReference type="Pfam" id="PF01608">
    <property type="entry name" value="I_LWEQ"/>
    <property type="match status" value="1"/>
</dbReference>
<dbReference type="Pfam" id="PF02174">
    <property type="entry name" value="IRS"/>
    <property type="match status" value="1"/>
</dbReference>
<dbReference type="Pfam" id="PF21896">
    <property type="entry name" value="Talin_IBS2B"/>
    <property type="match status" value="3"/>
</dbReference>
<dbReference type="Pfam" id="PF09141">
    <property type="entry name" value="Talin_middle"/>
    <property type="match status" value="1"/>
</dbReference>
<dbReference type="Pfam" id="PF21692">
    <property type="entry name" value="Talin_R4"/>
    <property type="match status" value="1"/>
</dbReference>
<dbReference type="Pfam" id="PF25177">
    <property type="entry name" value="Talin_VBS2"/>
    <property type="match status" value="1"/>
</dbReference>
<dbReference type="Pfam" id="PF21865">
    <property type="entry name" value="TLN1-like_RS"/>
    <property type="match status" value="3"/>
</dbReference>
<dbReference type="Pfam" id="PF08913">
    <property type="entry name" value="VBS"/>
    <property type="match status" value="1"/>
</dbReference>
<dbReference type="SMART" id="SM00295">
    <property type="entry name" value="B41"/>
    <property type="match status" value="1"/>
</dbReference>
<dbReference type="SMART" id="SM00307">
    <property type="entry name" value="ILWEQ"/>
    <property type="match status" value="1"/>
</dbReference>
<dbReference type="SMART" id="SM01244">
    <property type="entry name" value="IRS"/>
    <property type="match status" value="1"/>
</dbReference>
<dbReference type="SUPFAM" id="SSF109880">
    <property type="entry name" value="A middle domain of Talin 1"/>
    <property type="match status" value="1"/>
</dbReference>
<dbReference type="SUPFAM" id="SSF47220">
    <property type="entry name" value="alpha-catenin/vinculin-like"/>
    <property type="match status" value="5"/>
</dbReference>
<dbReference type="SUPFAM" id="SSF109885">
    <property type="entry name" value="I/LWEQ domain"/>
    <property type="match status" value="4"/>
</dbReference>
<dbReference type="SUPFAM" id="SSF50729">
    <property type="entry name" value="PH domain-like"/>
    <property type="match status" value="1"/>
</dbReference>
<dbReference type="SUPFAM" id="SSF47031">
    <property type="entry name" value="Second domain of FERM"/>
    <property type="match status" value="1"/>
</dbReference>
<dbReference type="SUPFAM" id="SSF54236">
    <property type="entry name" value="Ubiquitin-like"/>
    <property type="match status" value="1"/>
</dbReference>
<dbReference type="PROSITE" id="PS00660">
    <property type="entry name" value="FERM_1"/>
    <property type="match status" value="1"/>
</dbReference>
<dbReference type="PROSITE" id="PS00661">
    <property type="entry name" value="FERM_2"/>
    <property type="match status" value="1"/>
</dbReference>
<dbReference type="PROSITE" id="PS50057">
    <property type="entry name" value="FERM_3"/>
    <property type="match status" value="1"/>
</dbReference>
<dbReference type="PROSITE" id="PS50945">
    <property type="entry name" value="I_LWEQ"/>
    <property type="match status" value="1"/>
</dbReference>
<proteinExistence type="evidence at protein level"/>
<keyword id="KW-0002">3D-structure</keyword>
<keyword id="KW-0965">Cell junction</keyword>
<keyword id="KW-1003">Cell membrane</keyword>
<keyword id="KW-0966">Cell projection</keyword>
<keyword id="KW-0963">Cytoplasm</keyword>
<keyword id="KW-0206">Cytoskeleton</keyword>
<keyword id="KW-0903">Direct protein sequencing</keyword>
<keyword id="KW-0325">Glycoprotein</keyword>
<keyword id="KW-0472">Membrane</keyword>
<keyword id="KW-0597">Phosphoprotein</keyword>
<keyword id="KW-1185">Reference proteome</keyword>
<name>TLN1_CHICK</name>
<feature type="chain" id="PRO_0000219430" description="Talin-1">
    <location>
        <begin position="1"/>
        <end position="2541"/>
    </location>
</feature>
<feature type="domain" description="FERM" evidence="3">
    <location>
        <begin position="86"/>
        <end position="403"/>
    </location>
</feature>
<feature type="domain" description="I/LWEQ" evidence="4">
    <location>
        <begin position="2292"/>
        <end position="2531"/>
    </location>
</feature>
<feature type="region of interest" description="Interaction with LAYN" evidence="10">
    <location>
        <begin position="280"/>
        <end position="435"/>
    </location>
</feature>
<feature type="region of interest" description="Helical bundle R1" evidence="1">
    <location>
        <begin position="482"/>
        <end position="655"/>
    </location>
</feature>
<feature type="region of interest" description="Helical bundle R2" evidence="1">
    <location>
        <begin position="656"/>
        <end position="786"/>
    </location>
</feature>
<feature type="region of interest" description="Helical bundle R3" evidence="1">
    <location>
        <begin position="787"/>
        <end position="911"/>
    </location>
</feature>
<feature type="region of interest" description="Helical bundle R4" evidence="1">
    <location>
        <begin position="913"/>
        <end position="1043"/>
    </location>
</feature>
<feature type="region of interest" description="Helical bundle R5" evidence="1">
    <location>
        <begin position="1045"/>
        <end position="1205"/>
    </location>
</feature>
<feature type="region of interest" description="Helical bundle R6" evidence="1">
    <location>
        <begin position="1206"/>
        <end position="1356"/>
    </location>
</feature>
<feature type="region of interest" description="Helical bundle R7A" evidence="1">
    <location>
        <begin position="1357"/>
        <end position="1452"/>
    </location>
</feature>
<feature type="region of interest" description="Interaction with VCL and F-actin" evidence="1">
    <location>
        <begin position="1358"/>
        <end position="1658"/>
    </location>
</feature>
<feature type="region of interest" description="Helical bundle R8" evidence="1">
    <location>
        <begin position="1460"/>
        <end position="1579"/>
    </location>
</feature>
<feature type="region of interest" description="Helical bundle R7B" evidence="1">
    <location>
        <begin position="1580"/>
        <end position="1652"/>
    </location>
</feature>
<feature type="region of interest" description="Helical bundle R9" evidence="1">
    <location>
        <begin position="1654"/>
        <end position="1821"/>
    </location>
</feature>
<feature type="region of interest" description="Helical bundle R10" evidence="1">
    <location>
        <begin position="1822"/>
        <end position="1972"/>
    </location>
</feature>
<feature type="region of interest" description="Helical bundle R11" evidence="1">
    <location>
        <begin position="1973"/>
        <end position="2139"/>
    </location>
</feature>
<feature type="region of interest" description="Helical bundle R12" evidence="1">
    <location>
        <begin position="2140"/>
        <end position="2293"/>
    </location>
</feature>
<feature type="region of interest" description="Helical bundle R13" evidence="1">
    <location>
        <begin position="2299"/>
        <end position="2481"/>
    </location>
</feature>
<feature type="glycosylation site" id="CAR_000155" description="O-linked (GlcNAc) threonine" evidence="7">
    <location>
        <position position="1486"/>
    </location>
</feature>
<feature type="glycosylation site" id="CAR_000156" description="O-linked (GlcNAc) threonine" evidence="7">
    <location>
        <position position="1889"/>
    </location>
</feature>
<feature type="helix" evidence="11">
    <location>
        <begin position="201"/>
        <end position="205"/>
    </location>
</feature>
<feature type="helix" evidence="11">
    <location>
        <begin position="209"/>
        <end position="224"/>
    </location>
</feature>
<feature type="strand" evidence="12">
    <location>
        <begin position="226"/>
        <end position="228"/>
    </location>
</feature>
<feature type="helix" evidence="11">
    <location>
        <begin position="232"/>
        <end position="247"/>
    </location>
</feature>
<feature type="turn" evidence="11">
    <location>
        <begin position="252"/>
        <end position="254"/>
    </location>
</feature>
<feature type="turn" evidence="19">
    <location>
        <begin position="257"/>
        <end position="259"/>
    </location>
</feature>
<feature type="helix" evidence="11">
    <location>
        <begin position="262"/>
        <end position="264"/>
    </location>
</feature>
<feature type="helix" evidence="11">
    <location>
        <begin position="268"/>
        <end position="270"/>
    </location>
</feature>
<feature type="helix" evidence="11">
    <location>
        <begin position="276"/>
        <end position="285"/>
    </location>
</feature>
<feature type="turn" evidence="11">
    <location>
        <begin position="286"/>
        <end position="288"/>
    </location>
</feature>
<feature type="helix" evidence="11">
    <location>
        <begin position="291"/>
        <end position="304"/>
    </location>
</feature>
<feature type="turn" evidence="11">
    <location>
        <begin position="306"/>
        <end position="309"/>
    </location>
</feature>
<feature type="strand" evidence="11">
    <location>
        <begin position="311"/>
        <end position="317"/>
    </location>
</feature>
<feature type="strand" evidence="18">
    <location>
        <begin position="320"/>
        <end position="322"/>
    </location>
</feature>
<feature type="strand" evidence="11">
    <location>
        <begin position="326"/>
        <end position="332"/>
    </location>
</feature>
<feature type="strand" evidence="11">
    <location>
        <begin position="334"/>
        <end position="341"/>
    </location>
</feature>
<feature type="turn" evidence="11">
    <location>
        <begin position="342"/>
        <end position="344"/>
    </location>
</feature>
<feature type="strand" evidence="11">
    <location>
        <begin position="347"/>
        <end position="352"/>
    </location>
</feature>
<feature type="helix" evidence="11">
    <location>
        <begin position="353"/>
        <end position="355"/>
    </location>
</feature>
<feature type="strand" evidence="11">
    <location>
        <begin position="358"/>
        <end position="361"/>
    </location>
</feature>
<feature type="strand" evidence="11">
    <location>
        <begin position="363"/>
        <end position="369"/>
    </location>
</feature>
<feature type="helix" evidence="11">
    <location>
        <begin position="371"/>
        <end position="373"/>
    </location>
</feature>
<feature type="strand" evidence="11">
    <location>
        <begin position="374"/>
        <end position="376"/>
    </location>
</feature>
<feature type="strand" evidence="11">
    <location>
        <begin position="378"/>
        <end position="381"/>
    </location>
</feature>
<feature type="helix" evidence="11">
    <location>
        <begin position="385"/>
        <end position="393"/>
    </location>
</feature>
<feature type="helix" evidence="16">
    <location>
        <begin position="823"/>
        <end position="841"/>
    </location>
</feature>
<feature type="helix" evidence="14">
    <location>
        <begin position="855"/>
        <end position="873"/>
    </location>
</feature>
<feature type="turn" evidence="13">
    <location>
        <begin position="1945"/>
        <end position="1947"/>
    </location>
</feature>
<feature type="helix" evidence="15">
    <location>
        <begin position="1948"/>
        <end position="1966"/>
    </location>
</feature>
<feature type="helix" evidence="17">
    <location>
        <begin position="2345"/>
        <end position="2361"/>
    </location>
</feature>
<comment type="function">
    <text>High molecular weight cytoskeletal protein concentrated at regions of cell-substratum contact and, in lymphocytes, at cell-cell contacts. Involved in connections of major cytoskeletal structures to the plasma membrane.</text>
</comment>
<comment type="subunit">
    <text evidence="1 2 5 6 8 9 10">Interacts with PIP5K1C and NRAP (By similarity). Binds with high affinity to vinculin VCL and with low affinity to integrins (PubMed:12535520, PubMed:14702644, PubMed:20610383, PubMed:8937989). Interacts with APBB1IP; this inhibits VCL binding (By similarity). Interacts with F-actin (PubMed:8937989). Interacts with LAYN (PubMed:9786953). Interacts with THSD1.</text>
</comment>
<comment type="interaction">
    <interactant intactId="EBI-1035421">
        <id>P54939</id>
    </interactant>
    <interactant intactId="EBI-702847">
        <id>P05106</id>
        <label>ITGB3</label>
    </interactant>
    <organismsDiffer>true</organismsDiffer>
    <experiments>2</experiments>
</comment>
<comment type="subcellular location">
    <subcellularLocation>
        <location>Cell projection</location>
        <location>Ruffle membrane</location>
        <topology>Peripheral membrane protein</topology>
        <orientation>Cytoplasmic side</orientation>
    </subcellularLocation>
    <subcellularLocation>
        <location>Cytoplasm</location>
        <location>Cytoskeleton</location>
    </subcellularLocation>
    <subcellularLocation>
        <location evidence="1">Cell surface</location>
    </subcellularLocation>
    <subcellularLocation>
        <location evidence="1">Cell junction</location>
        <location evidence="1">Focal adhesion</location>
    </subcellularLocation>
    <text>Colocalizes with LAYN at the membrane ruffles.</text>
</comment>
<comment type="domain">
    <text evidence="1">Consists of an N-terminal FERM domain linked via a short unstructured region to a large flexible C-terminal rod which contains 13 amphipathic helical bundles (R1-R13). The rod begins with a five-helix bundle (R1) followed by three four-helix bundles (R2-R4). These are followed by a series of eight five-helix bundles (R5-R7 and R9-R13) in which the N- and C-termini are positioned at opposite ends of the bundle, creating a linear chain. The four-helix bundle R8 does not disrupt the chain because it is inserted into a loop in the R7 five-helix bundle. The uneven distribution of four- and five-helix bundles creates two distinctly different zones: a compact N-terminal region sensitive to stretch and a linear C-terminal region that is optimal for force transmission.</text>
</comment>
<comment type="PTM">
    <text evidence="1 2">Phosphorylated.</text>
</comment>
<gene>
    <name type="primary">TLN1</name>
    <name type="synonym">TLN</name>
</gene>
<protein>
    <recommendedName>
        <fullName>Talin-1</fullName>
    </recommendedName>
</protein>
<reference key="1">
    <citation type="journal article" date="1996" name="J. Cell Sci.">
        <title>Talin contains three actin-binding sites each of which is adjacent to a vinculin-binding site.</title>
        <authorList>
            <person name="Hemmings L."/>
            <person name="Rees D.J.G."/>
            <person name="Ohanian V."/>
            <person name="Bolton S.J."/>
            <person name="Gilmore A.P."/>
            <person name="Patel B."/>
            <person name="Priddle H."/>
            <person name="Trevithick J.E."/>
            <person name="Hynes R.O."/>
            <person name="Critchley D.R."/>
        </authorList>
    </citation>
    <scope>NUCLEOTIDE SEQUENCE [MRNA]</scope>
    <scope>INTERACTION WITH F-ACTIN AND VCL</scope>
</reference>
<reference key="2">
    <citation type="journal article" date="1992" name="J. Biol. Chem.">
        <title>The cytoskeletal protein talin is O-glycosylated.</title>
        <authorList>
            <person name="Hagmann J."/>
            <person name="Grob M."/>
            <person name="Burger M.M."/>
        </authorList>
    </citation>
    <scope>PROTEIN SEQUENCE OF 1469-1487 AND 1882-1898</scope>
    <scope>GLYCOSYLATION AT THR-1486 AND THR-1889</scope>
    <source>
        <tissue>Gizzard</tissue>
    </source>
</reference>
<reference key="3">
    <citation type="journal article" date="2003" name="Mol. Cell">
        <title>Structural determinants of integrin recognition by talin.</title>
        <authorList>
            <person name="Garcia-Alvarez B."/>
            <person name="de Pereda J.M."/>
            <person name="Calderwood D.A."/>
            <person name="Ulmer T.S."/>
            <person name="Critchley D."/>
            <person name="Campbell I.D."/>
            <person name="Ginsberg M.H."/>
            <person name="Liddington R.C."/>
        </authorList>
    </citation>
    <scope>X-RAY CRYSTALLOGRAPHY (1.75 ANGSTROMS) OF 196-400 IN COMPLEX WITH ITGB3</scope>
</reference>
<reference key="4">
    <citation type="journal article" date="2010" name="J. Biol. Chem.">
        <title>Central region of talin has a unique fold that binds vinculin and actin.</title>
        <authorList>
            <person name="Gingras A.R."/>
            <person name="Bate N."/>
            <person name="Goult B.T."/>
            <person name="Patel B."/>
            <person name="Kopp P.M."/>
            <person name="Emsley J."/>
            <person name="Barsukov I.L."/>
            <person name="Roberts G.C."/>
            <person name="Critchley D.R."/>
        </authorList>
    </citation>
    <scope>INTERACTION WITH VCL</scope>
</reference>
<reference key="5">
    <citation type="journal article" date="2004" name="Nature">
        <title>Vinculin activation by talin through helical bundle conversion.</title>
        <authorList>
            <person name="Izard T."/>
            <person name="Evans G."/>
            <person name="Borgon R.A."/>
            <person name="Rush C.L."/>
            <person name="Bricogne G."/>
            <person name="Bois P.R.J."/>
        </authorList>
    </citation>
    <scope>X-RAY CRYSTALLOGRAPHY (2.7 ANGSTROMS) OF 1944-1969 IN COMPLEX WITH VCL</scope>
</reference>
<reference key="6">
    <citation type="journal article" date="1998" name="J. Cell Biol.">
        <title>Layilin, a novel talin-binding transmembrane protein homologous with C-type lectins, is localized in membrane ruffles.</title>
        <authorList>
            <person name="Borowsky M.L."/>
            <person name="Hynes R.O."/>
        </authorList>
    </citation>
    <scope>INTERACTION WITH LAYN</scope>
</reference>
<sequence length="2541" mass="271842">MVALSLKISIGNVVKTMQFEPSTMVYDACRMIRERVPEAQMGQPNDFGLFLSDEDPKKGIWLEAGKALDYYMLRNGDTMEYKKKQRPLKIRMLDGTVKTVMVDDSKTVTDMLTTICARIGITNYDEYSLVREIMEEKKEEVTGTLKKDKTLLRDEKKMEKLKQKLHTDDELNWLDHGRTLREQGIDDNETLLLRRKFFYSDQNVDSRDPVQLNLLYVQARDDILNGSHPVSFDKACEFAGYQCQIQFGPHNEQKHKPGFLELKDFLPKEYIKQKGERKIFMAHKNCGNMSEIEAKVRYVKLARSLKTYGVSFFLVKEKMKGKNKLVPRLLGITKECVMRVDEKTKEVIQEWSLTNIKRWAASPKSFTLDFGDYQDGYYSVQTTEGEQIAQLIAGYIDIILKKKKSKDHFGLEGDEESTMLEDSVSPKKSTVLQQQFNRVGKAELGSVALPAIMRTGAGGPENFQVGTMPQAQMQITSGQMHRGHMPPLTSAQQALTGTINSSMQAVNAAQATLDDFETLPPLGQDAASKAWRKNKMDESKHEIHSQADAITAGTASVVNLTAGDPADTDYTAVGCAVTTISSNLTEMSKGVKLLAALMEDEGGNGRQLLQAAKNLASAVSDLLKTAQPASAEPRQNLLQAAGLVGQTSGELLQQIGESDTDPRFQDMLMQLAKAVASAAAALVLKAKNVAQKTEDSALQTQVIAAATQCALSTSQLVACTKVVAPTISSPVCQEQLIEAGKLVAKSAEGCVEASKAATNDDQLLKQVGVAATAVTQALNDLLQHIKQHATGGQPIGRYDQATDTILNVTENIFSSMGDAGEMVRQARILAQATSDLVNAIKADAEGETDLENSRKLLSAAKILADATAKMVEAAKGAAAHPDSEEQQQRLREAAEGLRMATNAAAQNAIKKKLVHKLEHAAKQAAASATQTIAAAQHAAASNKNPAAQQQLVQSCKVVADQIPMLVQGVRGSQSQPDSPSAQLALIAASQNFLQPGGKMVAAAKATVPTITDQASAMQLSQCAKNLAAALAELRTAAQKAQEACGPLEIDSALGLVQSLERDLKEAKAAARDGKLKPLPGETMEKCAQDLGNSTKAVTSAIAHLLGEVAQGNENYTGIAAREVAQALRSLSQAARGVAANSSDPQAQNAMLECASDVMDKANNLIEEARKAVAKPGDPDSQQRLVQVAKAVSQALNRCVNCLPGQRDVDAAIRMVGEASKRLLSDSFPPSNKTFQEAQSQLNRAAAGLNQSANELVQASRGTPQDLAKSSGKFGQDFNEFLQAGVEMASLSPTKEDQAQVVSNLKSISMSSSKLLLAAKALSADPTSPNLKSQLAAAARAVTDSINQLITMCTQQAPGQKECDNALRELETVKELLENPTQTVNDMSYFSCLDSVMENSKVLGESMAGISQNAKNSKLPEFGESISAASKALCGLTEAAAQAAYLVGVSDPNSQAGQQGLVDPTQFARANQAIQMACQNLVDPACTQSQVLSAATIVAKHTSALCNTCRLASSRTANPVAKRQFVQPAKEVANSTANLVKTIKALDGAFNEENRERCRAATAPLIEAVDNLTAFASNPEFATVPAQISPEGRRAMEPIVTSAKTMLESSAGLIQTARSLAVNPKDPPQWSVLAGHSRTVSDSIKKLITNMRDKAPGQRECDEAIDVLNRCMREVDQASLAAISQQLAPREGISQEALHNQMITAVQEINNLIEPVASAARAEASQLGHKVSQMAQYFEPLILAAIGAASKTPNHQQQMNLLDQTKTLAESALQMLYTAKEAGGNPKQAAHTQEALEEAVQMMKEAVEDLTTTLNEAASAAGVVGGMVDSITQAINQLDEGPMGEPEGTFVDYQTTMVKTAKAIAVTVQEMVTKSTTNPDELGILANQLTNDYGQLAQQAKPAALTAENEEIGSHIKRRVQELGHGCAALVTKAGALQCSPSDAYTKKELIESARKVSEKVSHVLAALQAGNRGTQACITAASAVSGIIADLDTTIMFATAGTLNRENSETFADHREGILKTAKALVEDTKVLVQNATASQEKLAQAAQSSVSTITRLAEVVKLGAASLGSEDPETQVVLINAVKDVAKALGDLIGATKAAAGKAGDDPAVYQLKNSAKVMVTNVTSLLKTVKAVEDEATKGTRALEATIEHIRQELAVFSSPVPPAQVSTPEDFIRMTKGITMATAKAVAAGNSCRQEDVIATANLSRRAIADMLRACKEAAYHPEVSADVRQRALRFGKECADGYLELLEHVLVILQKPTHELKQQLAGYSKRVASSVTELIQAAEAMKGTEWVDPEDPTVIAENELLGAAAAIEAAAKKLEQLKPRAKPKQADESLDFEEQILEAAKSIAAATSALVKAASAAQRELVAQGKVGVIPANAVDDGQWSQGLISAARMVAAATNNLCEAANAAVQGHASEEKLISSAKQVAASTAQLLVACKVKADHDSEAMKRLQAAGNAVKRASDNLVKAAQKAAAFQDHDETVVVKEKMVGGIAQIIAAQEEMLRKERELEEARKKLAMIRQQQYKFLPTELRDEEQN</sequence>
<accession>P54939</accession>
<accession>Q8AWI0</accession>
<organism>
    <name type="scientific">Gallus gallus</name>
    <name type="common">Chicken</name>
    <dbReference type="NCBI Taxonomy" id="9031"/>
    <lineage>
        <taxon>Eukaryota</taxon>
        <taxon>Metazoa</taxon>
        <taxon>Chordata</taxon>
        <taxon>Craniata</taxon>
        <taxon>Vertebrata</taxon>
        <taxon>Euteleostomi</taxon>
        <taxon>Archelosauria</taxon>
        <taxon>Archosauria</taxon>
        <taxon>Dinosauria</taxon>
        <taxon>Saurischia</taxon>
        <taxon>Theropoda</taxon>
        <taxon>Coelurosauria</taxon>
        <taxon>Aves</taxon>
        <taxon>Neognathae</taxon>
        <taxon>Galloanserae</taxon>
        <taxon>Galliformes</taxon>
        <taxon>Phasianidae</taxon>
        <taxon>Phasianinae</taxon>
        <taxon>Gallus</taxon>
    </lineage>
</organism>
<evidence type="ECO:0000250" key="1">
    <source>
        <dbReference type="UniProtKB" id="P26039"/>
    </source>
</evidence>
<evidence type="ECO:0000250" key="2">
    <source>
        <dbReference type="UniProtKB" id="Q9Y490"/>
    </source>
</evidence>
<evidence type="ECO:0000255" key="3">
    <source>
        <dbReference type="PROSITE-ProRule" id="PRU00084"/>
    </source>
</evidence>
<evidence type="ECO:0000255" key="4">
    <source>
        <dbReference type="PROSITE-ProRule" id="PRU00292"/>
    </source>
</evidence>
<evidence type="ECO:0000269" key="5">
    <source>
    </source>
</evidence>
<evidence type="ECO:0000269" key="6">
    <source>
    </source>
</evidence>
<evidence type="ECO:0000269" key="7">
    <source>
    </source>
</evidence>
<evidence type="ECO:0000269" key="8">
    <source>
    </source>
</evidence>
<evidence type="ECO:0000269" key="9">
    <source>
    </source>
</evidence>
<evidence type="ECO:0000269" key="10">
    <source>
    </source>
</evidence>
<evidence type="ECO:0007829" key="11">
    <source>
        <dbReference type="PDB" id="1MIX"/>
    </source>
</evidence>
<evidence type="ECO:0007829" key="12">
    <source>
        <dbReference type="PDB" id="1MIZ"/>
    </source>
</evidence>
<evidence type="ECO:0007829" key="13">
    <source>
        <dbReference type="PDB" id="1RKC"/>
    </source>
</evidence>
<evidence type="ECO:0007829" key="14">
    <source>
        <dbReference type="PDB" id="1U6H"/>
    </source>
</evidence>
<evidence type="ECO:0007829" key="15">
    <source>
        <dbReference type="PDB" id="1XWJ"/>
    </source>
</evidence>
<evidence type="ECO:0007829" key="16">
    <source>
        <dbReference type="PDB" id="1ZVZ"/>
    </source>
</evidence>
<evidence type="ECO:0007829" key="17">
    <source>
        <dbReference type="PDB" id="1ZW2"/>
    </source>
</evidence>
<evidence type="ECO:0007829" key="18">
    <source>
        <dbReference type="PDB" id="2H7D"/>
    </source>
</evidence>
<evidence type="ECO:0007829" key="19">
    <source>
        <dbReference type="PDB" id="2HRJ"/>
    </source>
</evidence>